<sequence length="245" mass="27764">MEKTELIQKAKLAEQAERYDDMATCMKAVTEQGAELSNEERNLLSVAYKNVVGGRRSAWRVISSIEQKTDTSDKKLQLIKDYREKVESELRSICTTVLELLDKYLIANATNPESKVFYLKMKGDYFRYLAEVACGDDRKQTIDNSQGAYQEAFDISKKEMQPTHPIRLGLALNFSVFYYEILNNPELACTLAKTAFDEAIAELDTLNEDSYKDSTLIMQLLRDNLTLWTSDSAGEECDAAEGAEN</sequence>
<reference key="1">
    <citation type="journal article" date="1991" name="Biochim. Biophys. Acta">
        <title>Primary structure of a human protein kinase regulator protein.</title>
        <authorList>
            <person name="Nielsen P.J."/>
        </authorList>
    </citation>
    <scope>NUCLEOTIDE SEQUENCE [MRNA]</scope>
    <source>
        <tissue>T-cell</tissue>
    </source>
</reference>
<reference key="2">
    <citation type="journal article" date="1993" name="J. Mol. Biol.">
        <title>Molecular cloning and expression of the transformation sensitive epithelial marker stratifin. A member of a protein family that has been involved in the protein kinase C signalling pathway.</title>
        <authorList>
            <person name="Leffers H."/>
            <person name="Madsen P."/>
            <person name="Rasmussen H.H."/>
            <person name="Honore B."/>
            <person name="Andersen A.H."/>
            <person name="Walbum E."/>
            <person name="Vandekerckhove J."/>
            <person name="Celis J.E."/>
        </authorList>
    </citation>
    <scope>NUCLEOTIDE SEQUENCE [MRNA]</scope>
    <source>
        <tissue>Keratinocyte</tissue>
    </source>
</reference>
<reference key="3">
    <citation type="submission" date="2004-10" db="EMBL/GenBank/DDBJ databases">
        <title>Cloning of human full-length CDSs in BD Creator(TM) system donor vector.</title>
        <authorList>
            <person name="Kalnine N."/>
            <person name="Chen X."/>
            <person name="Rolfs A."/>
            <person name="Halleck A."/>
            <person name="Hines L."/>
            <person name="Eisenstein S."/>
            <person name="Koundinya M."/>
            <person name="Raphael J."/>
            <person name="Moreira D."/>
            <person name="Kelley T."/>
            <person name="LaBaer J."/>
            <person name="Lin Y."/>
            <person name="Phelan M."/>
            <person name="Farmer A."/>
        </authorList>
    </citation>
    <scope>NUCLEOTIDE SEQUENCE [LARGE SCALE MRNA]</scope>
</reference>
<reference key="4">
    <citation type="submission" date="2005-09" db="EMBL/GenBank/DDBJ databases">
        <authorList>
            <person name="Mural R.J."/>
            <person name="Istrail S."/>
            <person name="Sutton G.G."/>
            <person name="Florea L."/>
            <person name="Halpern A.L."/>
            <person name="Mobarry C.M."/>
            <person name="Lippert R."/>
            <person name="Walenz B."/>
            <person name="Shatkay H."/>
            <person name="Dew I."/>
            <person name="Miller J.R."/>
            <person name="Flanigan M.J."/>
            <person name="Edwards N.J."/>
            <person name="Bolanos R."/>
            <person name="Fasulo D."/>
            <person name="Halldorsson B.V."/>
            <person name="Hannenhalli S."/>
            <person name="Turner R."/>
            <person name="Yooseph S."/>
            <person name="Lu F."/>
            <person name="Nusskern D.R."/>
            <person name="Shue B.C."/>
            <person name="Zheng X.H."/>
            <person name="Zhong F."/>
            <person name="Delcher A.L."/>
            <person name="Huson D.H."/>
            <person name="Kravitz S.A."/>
            <person name="Mouchard L."/>
            <person name="Reinert K."/>
            <person name="Remington K.A."/>
            <person name="Clark A.G."/>
            <person name="Waterman M.S."/>
            <person name="Eichler E.E."/>
            <person name="Adams M.D."/>
            <person name="Hunkapiller M.W."/>
            <person name="Myers E.W."/>
            <person name="Venter J.C."/>
        </authorList>
    </citation>
    <scope>NUCLEOTIDE SEQUENCE [LARGE SCALE GENOMIC DNA]</scope>
</reference>
<reference key="5">
    <citation type="journal article" date="2004" name="Genome Res.">
        <title>The status, quality, and expansion of the NIH full-length cDNA project: the Mammalian Gene Collection (MGC).</title>
        <authorList>
            <consortium name="The MGC Project Team"/>
        </authorList>
    </citation>
    <scope>NUCLEOTIDE SEQUENCE [LARGE SCALE MRNA]</scope>
    <source>
        <tissue>Placenta</tissue>
        <tissue>Skin</tissue>
        <tissue>Uterus</tissue>
    </source>
</reference>
<reference key="6">
    <citation type="journal article" date="2003" name="Nat. Biotechnol.">
        <title>Exploring proteomes and analyzing protein processing by mass spectrometric identification of sorted N-terminal peptides.</title>
        <authorList>
            <person name="Gevaert K."/>
            <person name="Goethals M."/>
            <person name="Martens L."/>
            <person name="Van Damme J."/>
            <person name="Staes A."/>
            <person name="Thomas G.R."/>
            <person name="Vandekerckhove J."/>
        </authorList>
    </citation>
    <scope>PROTEIN SEQUENCE OF 1-18</scope>
    <source>
        <tissue>Platelet</tissue>
    </source>
</reference>
<reference key="7">
    <citation type="journal article" date="2013" name="MBio">
        <title>ACBD3 interaction with TBC1 domain 22 protein is differentially affected by enteroviral and kobuviral 3A protein binding.</title>
        <authorList>
            <person name="Greninger A.L."/>
            <person name="Knudsen G.M."/>
            <person name="Betegon M."/>
            <person name="Burlingame A.L."/>
            <person name="DeRisi J.L."/>
        </authorList>
    </citation>
    <scope>PROTEIN SEQUENCE OF 1-9; 12-55; 61-74; 128-157; 168-193 AND 213-222</scope>
    <scope>INTERACTION WITH PI4KB; TBC1D22A AND TBC1D22B</scope>
    <scope>IDENTIFICATION BY MASS SPECTROMETRY</scope>
</reference>
<reference key="8">
    <citation type="submission" date="2008-02" db="UniProtKB">
        <authorList>
            <person name="Bienvenut W.V."/>
            <person name="Dhillon A.S."/>
            <person name="Kolch W."/>
        </authorList>
    </citation>
    <scope>PROTEIN SEQUENCE OF 1-9; 28-49; 61-68; 104-115; 139-167 AND 213-222</scope>
    <scope>ACETYLATION AT MET-1</scope>
    <scope>IDENTIFICATION BY MASS SPECTROMETRY</scope>
    <source>
        <tissue>B-cell lymphoma</tissue>
        <tissue>Hepatoma</tissue>
    </source>
</reference>
<reference key="9">
    <citation type="submission" date="1998-06" db="EMBL/GenBank/DDBJ databases">
        <authorList>
            <person name="Yu W."/>
            <person name="Gibbs R.A."/>
        </authorList>
    </citation>
    <scope>NUCLEOTIDE SEQUENCE [LARGE SCALE MRNA] OF 73-245</scope>
    <source>
        <tissue>Brain</tissue>
    </source>
</reference>
<reference key="10">
    <citation type="journal article" date="1997" name="J. Biol. Chem.">
        <title>14-3-3 is phosphorylated by casein kinase I on residue 233. Phosphorylation at this site in vivo regulates Raf/14-3-3 interaction.</title>
        <authorList>
            <person name="Dubois T."/>
            <person name="Rommel C."/>
            <person name="Howell S."/>
            <person name="Steinhussen U."/>
            <person name="Soneji Y."/>
            <person name="Morrice N."/>
            <person name="Moelling K."/>
            <person name="Aitken A."/>
        </authorList>
    </citation>
    <scope>PHOSPHORYLATION AT SER-232</scope>
    <scope>IDENTIFICATION BY MASS SPECTROMETRY</scope>
</reference>
<reference key="11">
    <citation type="journal article" date="2000" name="J. Biol. Chem.">
        <title>14-3-3 interacts with regulator of G protein signaling proteins and modulates their activity.</title>
        <authorList>
            <person name="Benzing T."/>
            <person name="Yaffe M.B."/>
            <person name="Arnould T."/>
            <person name="Sellin L."/>
            <person name="Schermer B."/>
            <person name="Schilling B."/>
            <person name="Schreiber R."/>
            <person name="Kunzelmann K."/>
            <person name="Leparc G.G."/>
            <person name="Kim E."/>
            <person name="Walz G."/>
        </authorList>
    </citation>
    <scope>INTERACTION WITH RGS7</scope>
</reference>
<reference key="12">
    <citation type="journal article" date="2000" name="J. Neurochem.">
        <title>A 14-3-3 mRNA is up-regulated in amyotrophic lateral sclerosis spinal cord.</title>
        <authorList>
            <person name="Malaspina A."/>
            <person name="Kaushik N."/>
            <person name="de Belleroche J."/>
        </authorList>
    </citation>
    <scope>TISSUE SPECIFICITY</scope>
</reference>
<reference key="13">
    <citation type="journal article" date="2002" name="J. Biol. Chem.">
        <title>Akt-dependent phosphorylation of p27Kip1 promotes binding to 14-3-3 and cytoplasmic localization.</title>
        <authorList>
            <person name="Fujita N."/>
            <person name="Sato S."/>
            <person name="Katayama K."/>
            <person name="Tsuruo T."/>
        </authorList>
    </citation>
    <scope>INTERACTION WITH CDKN1B</scope>
</reference>
<reference key="14">
    <citation type="journal article" date="2002" name="J. Biol. Chem.">
        <title>Regulation of kinase activity of 3-phosphoinositide-dependent protein kinase-1 by binding to 14-3-3.</title>
        <authorList>
            <person name="Sato S."/>
            <person name="Fujita N."/>
            <person name="Tsuruo T."/>
        </authorList>
    </citation>
    <scope>FUNCTION</scope>
    <scope>INTERACTION WITH PDPK1</scope>
</reference>
<reference key="15">
    <citation type="journal article" date="2003" name="Nature">
        <title>Proteomic characterization of the human centrosome by protein correlation profiling.</title>
        <authorList>
            <person name="Andersen J.S."/>
            <person name="Wilkinson C.J."/>
            <person name="Mayor T."/>
            <person name="Mortensen P."/>
            <person name="Nigg E.A."/>
            <person name="Mann M."/>
        </authorList>
    </citation>
    <scope>IDENTIFICATION BY MASS SPECTROMETRY</scope>
    <source>
        <tissue>Lymphoblast</tissue>
    </source>
</reference>
<reference key="16">
    <citation type="journal article" date="2004" name="J. Cell Biol.">
        <title>A pathway of neuregulin-induced activation of cofilin-phosphatase Slingshot and cofilin in lamellipodia.</title>
        <authorList>
            <person name="Nagata-Ohashi K."/>
            <person name="Ohta Y."/>
            <person name="Goto K."/>
            <person name="Chiba S."/>
            <person name="Mori R."/>
            <person name="Nishita M."/>
            <person name="Ohashi K."/>
            <person name="Kousaka K."/>
            <person name="Iwamatsu A."/>
            <person name="Niwa R."/>
            <person name="Uemura T."/>
            <person name="Mizuno K."/>
        </authorList>
    </citation>
    <scope>INTERACTION WITH SSH1</scope>
</reference>
<reference key="17">
    <citation type="journal article" date="2006" name="Cell">
        <title>Global, in vivo, and site-specific phosphorylation dynamics in signaling networks.</title>
        <authorList>
            <person name="Olsen J.V."/>
            <person name="Blagoev B."/>
            <person name="Gnad F."/>
            <person name="Macek B."/>
            <person name="Kumar C."/>
            <person name="Mortensen P."/>
            <person name="Mann M."/>
        </authorList>
    </citation>
    <scope>IDENTIFICATION BY MASS SPECTROMETRY [LARGE SCALE ANALYSIS]</scope>
    <source>
        <tissue>Cervix carcinoma</tissue>
    </source>
</reference>
<reference key="18">
    <citation type="journal article" date="2006" name="Mol. Cell. Proteomics">
        <title>Transgenic mouse proteomics identifies new 14-3-3-associated proteins involved in cytoskeletal rearrangements and cell signaling.</title>
        <authorList>
            <person name="Angrand P.O."/>
            <person name="Segura I."/>
            <person name="Voelkel P."/>
            <person name="Ghidelli S."/>
            <person name="Terry R."/>
            <person name="Brajenovic M."/>
            <person name="Vintersten K."/>
            <person name="Klein R."/>
            <person name="Superti-Furga G."/>
            <person name="Drewes G."/>
            <person name="Kuster B."/>
            <person name="Bouwmeester T."/>
            <person name="Acker-Palmer A."/>
        </authorList>
    </citation>
    <scope>INTERACTION WITH MARK2; MARK3 AND MARK4</scope>
</reference>
<reference key="19">
    <citation type="journal article" date="2008" name="EMBO J.">
        <title>Phosphorylation-dependent binding of 14-3-3 terminates signalling by the Gab2 docking protein.</title>
        <authorList>
            <person name="Brummer T."/>
            <person name="Larance M."/>
            <person name="Herrera Abreu M.T."/>
            <person name="Lyons R.J."/>
            <person name="Timpson P."/>
            <person name="Emmerich C.H."/>
            <person name="Fleuren E.D.G."/>
            <person name="Lehrbach G.M."/>
            <person name="Schramek D."/>
            <person name="Guilhaus M."/>
            <person name="James D.E."/>
            <person name="Daly R.J."/>
        </authorList>
    </citation>
    <scope>INTERACTION WITH GAB2</scope>
</reference>
<reference key="20">
    <citation type="journal article" date="2008" name="Mol. Cell">
        <title>Kinase-selective enrichment enables quantitative phosphoproteomics of the kinome across the cell cycle.</title>
        <authorList>
            <person name="Daub H."/>
            <person name="Olsen J.V."/>
            <person name="Bairlein M."/>
            <person name="Gnad F."/>
            <person name="Oppermann F.S."/>
            <person name="Korner R."/>
            <person name="Greff Z."/>
            <person name="Keri G."/>
            <person name="Stemmann O."/>
            <person name="Mann M."/>
        </authorList>
    </citation>
    <scope>IDENTIFICATION BY MASS SPECTROMETRY [LARGE SCALE ANALYSIS]</scope>
    <source>
        <tissue>Cervix carcinoma</tissue>
    </source>
</reference>
<reference key="21">
    <citation type="journal article" date="2008" name="Proc. Natl. Acad. Sci. U.S.A.">
        <title>A quantitative atlas of mitotic phosphorylation.</title>
        <authorList>
            <person name="Dephoure N."/>
            <person name="Zhou C."/>
            <person name="Villen J."/>
            <person name="Beausoleil S.A."/>
            <person name="Bakalarski C.E."/>
            <person name="Elledge S.J."/>
            <person name="Gygi S.P."/>
        </authorList>
    </citation>
    <scope>PHOSPHORYLATION [LARGE SCALE ANALYSIS] AT SER-232</scope>
    <scope>IDENTIFICATION BY MASS SPECTROMETRY [LARGE SCALE ANALYSIS]</scope>
    <source>
        <tissue>Cervix carcinoma</tissue>
    </source>
</reference>
<reference key="22">
    <citation type="journal article" date="2009" name="Biol. Psychiatry">
        <title>SLITRK1 binds 14-3-3 and regulates neurite outgrowth in a phosphorylation-dependent manner.</title>
        <authorList>
            <person name="Kajiwara Y."/>
            <person name="Buxbaum J.D."/>
            <person name="Grice D.E."/>
        </authorList>
    </citation>
    <scope>INTERACTION WITH SLITRK1</scope>
</reference>
<reference key="23">
    <citation type="journal article" date="2009" name="Sci. Signal.">
        <title>Quantitative phosphoproteomic analysis of T cell receptor signaling reveals system-wide modulation of protein-protein interactions.</title>
        <authorList>
            <person name="Mayya V."/>
            <person name="Lundgren D.H."/>
            <person name="Hwang S.-I."/>
            <person name="Rezaul K."/>
            <person name="Wu L."/>
            <person name="Eng J.K."/>
            <person name="Rodionov V."/>
            <person name="Han D.K."/>
        </authorList>
    </citation>
    <scope>IDENTIFICATION BY MASS SPECTROMETRY [LARGE SCALE ANALYSIS]</scope>
    <source>
        <tissue>Leukemic T-cell</tissue>
    </source>
</reference>
<reference key="24">
    <citation type="journal article" date="2009" name="Science">
        <title>Lysine acetylation targets protein complexes and co-regulates major cellular functions.</title>
        <authorList>
            <person name="Choudhary C."/>
            <person name="Kumar C."/>
            <person name="Gnad F."/>
            <person name="Nielsen M.L."/>
            <person name="Rehman M."/>
            <person name="Walther T.C."/>
            <person name="Olsen J.V."/>
            <person name="Mann M."/>
        </authorList>
    </citation>
    <scope>ACETYLATION [LARGE SCALE ANALYSIS] AT LYS-3; LYS-49; LYS-68 AND LYS-115</scope>
    <scope>IDENTIFICATION BY MASS SPECTROMETRY [LARGE SCALE ANALYSIS]</scope>
</reference>
<reference key="25">
    <citation type="journal article" date="2010" name="Sci. Signal.">
        <title>Quantitative phosphoproteomics reveals widespread full phosphorylation site occupancy during mitosis.</title>
        <authorList>
            <person name="Olsen J.V."/>
            <person name="Vermeulen M."/>
            <person name="Santamaria A."/>
            <person name="Kumar C."/>
            <person name="Miller M.L."/>
            <person name="Jensen L.J."/>
            <person name="Gnad F."/>
            <person name="Cox J."/>
            <person name="Jensen T.S."/>
            <person name="Nigg E.A."/>
            <person name="Brunak S."/>
            <person name="Mann M."/>
        </authorList>
    </citation>
    <scope>IDENTIFICATION BY MASS SPECTROMETRY [LARGE SCALE ANALYSIS]</scope>
    <source>
        <tissue>Cervix carcinoma</tissue>
    </source>
</reference>
<reference key="26">
    <citation type="journal article" date="2011" name="BMC Syst. Biol.">
        <title>Initial characterization of the human central proteome.</title>
        <authorList>
            <person name="Burkard T.R."/>
            <person name="Planyavsky M."/>
            <person name="Kaupe I."/>
            <person name="Breitwieser F.P."/>
            <person name="Buerckstuemmer T."/>
            <person name="Bennett K.L."/>
            <person name="Superti-Furga G."/>
            <person name="Colinge J."/>
        </authorList>
    </citation>
    <scope>IDENTIFICATION BY MASS SPECTROMETRY [LARGE SCALE ANALYSIS]</scope>
</reference>
<reference key="27">
    <citation type="journal article" date="2012" name="Proc. Natl. Acad. Sci. U.S.A.">
        <title>N-terminal acetylome analyses and functional insights of the N-terminal acetyltransferase NatB.</title>
        <authorList>
            <person name="Van Damme P."/>
            <person name="Lasa M."/>
            <person name="Polevoda B."/>
            <person name="Gazquez C."/>
            <person name="Elosegui-Artola A."/>
            <person name="Kim D.S."/>
            <person name="De Juan-Pardo E."/>
            <person name="Demeyer K."/>
            <person name="Hole K."/>
            <person name="Larrea E."/>
            <person name="Timmerman E."/>
            <person name="Prieto J."/>
            <person name="Arnesen T."/>
            <person name="Sherman F."/>
            <person name="Gevaert K."/>
            <person name="Aldabe R."/>
        </authorList>
    </citation>
    <scope>ACETYLATION [LARGE SCALE ANALYSIS] AT MET-1</scope>
    <scope>IDENTIFICATION BY MASS SPECTROMETRY [LARGE SCALE ANALYSIS]</scope>
</reference>
<reference key="28">
    <citation type="journal article" date="2014" name="J. Proteomics">
        <title>An enzyme assisted RP-RPLC approach for in-depth analysis of human liver phosphoproteome.</title>
        <authorList>
            <person name="Bian Y."/>
            <person name="Song C."/>
            <person name="Cheng K."/>
            <person name="Dong M."/>
            <person name="Wang F."/>
            <person name="Huang J."/>
            <person name="Sun D."/>
            <person name="Wang L."/>
            <person name="Ye M."/>
            <person name="Zou H."/>
        </authorList>
    </citation>
    <scope>IDENTIFICATION BY MASS SPECTROMETRY [LARGE SCALE ANALYSIS]</scope>
    <source>
        <tissue>Liver</tissue>
    </source>
</reference>
<reference key="29">
    <citation type="journal article" date="2015" name="Biochem. Biophys. Res. Commun.">
        <title>Suppression of death-associated protein kinase 2 by interaction with 14-3-3 proteins.</title>
        <authorList>
            <person name="Yuasa K."/>
            <person name="Ota R."/>
            <person name="Matsuda S."/>
            <person name="Isshiki K."/>
            <person name="Inoue M."/>
            <person name="Tsuji A."/>
        </authorList>
    </citation>
    <scope>INTERACTION WITH DAPK2</scope>
</reference>
<reference key="30">
    <citation type="journal article" date="2015" name="J. Cell Sci.">
        <title>Front-signal-dependent accumulation of the RHOA inhibitor FAM65B at leading edges polarizes neutrophils.</title>
        <authorList>
            <person name="Gao K."/>
            <person name="Tang W."/>
            <person name="Li Y."/>
            <person name="Zhang P."/>
            <person name="Wang D."/>
            <person name="Yu L."/>
            <person name="Wang C."/>
            <person name="Wu D."/>
        </authorList>
    </citation>
    <scope>INTERACTION WITH RIPOR2</scope>
</reference>
<reference key="31">
    <citation type="journal article" date="2015" name="Proteomics">
        <title>N-terminome analysis of the human mitochondrial proteome.</title>
        <authorList>
            <person name="Vaca Jacome A.S."/>
            <person name="Rabilloud T."/>
            <person name="Schaeffer-Reiss C."/>
            <person name="Rompais M."/>
            <person name="Ayoub D."/>
            <person name="Lane L."/>
            <person name="Bairoch A."/>
            <person name="Van Dorsselaer A."/>
            <person name="Carapito C."/>
        </authorList>
    </citation>
    <scope>ACETYLATION [LARGE SCALE ANALYSIS] AT MET-1</scope>
    <scope>IDENTIFICATION BY MASS SPECTROMETRY [LARGE SCALE ANALYSIS]</scope>
</reference>
<reference key="32">
    <citation type="journal article" date="2016" name="Sci. Transl. Med.">
        <title>Familial autoinflammation with neutrophilic dermatosis reveals a regulatory mechanism of pyrin activation.</title>
        <authorList>
            <person name="Masters S.L."/>
            <person name="Lagou V."/>
            <person name="Jeru I."/>
            <person name="Baker P.J."/>
            <person name="Van Eyck L."/>
            <person name="Parry D.A."/>
            <person name="Lawless D."/>
            <person name="De Nardo D."/>
            <person name="Garcia-Perez J.E."/>
            <person name="Dagley L.F."/>
            <person name="Holley C.L."/>
            <person name="Dooley J."/>
            <person name="Moghaddas F."/>
            <person name="Pasciuto E."/>
            <person name="Jeandel P.Y."/>
            <person name="Sciot R."/>
            <person name="Lyras D."/>
            <person name="Webb A.I."/>
            <person name="Nicholson S.E."/>
            <person name="De Somer L."/>
            <person name="van Nieuwenhove E."/>
            <person name="Ruuth-Praz J."/>
            <person name="Copin B."/>
            <person name="Cochet E."/>
            <person name="Medlej-Hashim M."/>
            <person name="Megarbane A."/>
            <person name="Schroder K."/>
            <person name="Savic S."/>
            <person name="Goris A."/>
            <person name="Amselem S."/>
            <person name="Wouters C."/>
            <person name="Liston A."/>
        </authorList>
    </citation>
    <scope>INTERACTION WITH MEFV</scope>
</reference>
<reference key="33">
    <citation type="journal article" date="2017" name="J. Clin. Invest.">
        <title>An inflammatory bowel disease-risk variant in INAVA decreases pattern recognition receptor-induced outcomes.</title>
        <authorList>
            <person name="Yan J."/>
            <person name="Hedl M."/>
            <person name="Abraham C."/>
        </authorList>
    </citation>
    <scope>FUNCTION</scope>
    <scope>INTERACTION WITH INAVA</scope>
</reference>
<reference key="34">
    <citation type="journal article" date="2017" name="Nat. Struct. Mol. Biol.">
        <title>Site-specific mapping of the human SUMO proteome reveals co-modification with phosphorylation.</title>
        <authorList>
            <person name="Hendriks I.A."/>
            <person name="Lyon D."/>
            <person name="Young C."/>
            <person name="Jensen L.J."/>
            <person name="Vertegaal A.C."/>
            <person name="Nielsen M.L."/>
        </authorList>
    </citation>
    <scope>SUMOYLATION [LARGE SCALE ANALYSIS] AT LYS-49</scope>
    <scope>IDENTIFICATION BY MASS SPECTROMETRY [LARGE SCALE ANALYSIS]</scope>
</reference>
<reference key="35">
    <citation type="journal article" date="1995" name="Nature">
        <title>Structure of a 14-3-3 protein and implications for coordination of multiple signalling pathways.</title>
        <authorList>
            <person name="Xiao B."/>
            <person name="Smerdon S.J."/>
            <person name="Jones D.H."/>
            <person name="Dodson G.G."/>
            <person name="Soneji Y."/>
            <person name="Aitken A."/>
            <person name="Gamblin S.J."/>
        </authorList>
    </citation>
    <scope>X-RAY CRYSTALLOGRAPHY (2.6 ANGSTROMS)</scope>
</reference>
<reference key="36">
    <citation type="journal article" date="2006" name="Proc. Natl. Acad. Sci. U.S.A.">
        <title>Structural basis for protein-protein interactions in the 14-3-3 protein family.</title>
        <authorList>
            <person name="Yang X."/>
            <person name="Lee W.H."/>
            <person name="Sobott F."/>
            <person name="Papagrigoriou E."/>
            <person name="Robinson C.V."/>
            <person name="Grossmann J.G."/>
            <person name="Sundstroem M."/>
            <person name="Doyle D.A."/>
            <person name="Elkins J.M."/>
        </authorList>
    </citation>
    <scope>X-RAY CRYSTALLOGRAPHY (2.8 ANGSTROMS) OF 1-234</scope>
    <scope>IDENTIFICATION BY MASS SPECTROMETRY</scope>
    <scope>INTERACTION WITH PHOSPHOSERINE MOTIFS</scope>
    <scope>SUBUNIT</scope>
</reference>
<accession>P27348</accession>
<accession>D6W4Z5</accession>
<accession>Q567U5</accession>
<accession>Q5TZU8</accession>
<accession>Q9UP48</accession>
<name>1433T_HUMAN</name>
<feature type="chain" id="PRO_0000058636" description="14-3-3 protein theta">
    <location>
        <begin position="1"/>
        <end position="245"/>
    </location>
</feature>
<feature type="site" description="Interaction with phosphoserine on interacting protein">
    <location>
        <position position="56"/>
    </location>
</feature>
<feature type="site" description="Interaction with phosphoserine on interacting protein">
    <location>
        <position position="127"/>
    </location>
</feature>
<feature type="modified residue" description="N-acetylmethionine" evidence="18 22 23">
    <location>
        <position position="1"/>
    </location>
</feature>
<feature type="modified residue" description="N6-acetyllysine" evidence="21">
    <location>
        <position position="3"/>
    </location>
</feature>
<feature type="modified residue" description="N6-acetyllysine; alternate" evidence="21">
    <location>
        <position position="49"/>
    </location>
</feature>
<feature type="modified residue" description="N6-acetyllysine" evidence="21">
    <location>
        <position position="68"/>
    </location>
</feature>
<feature type="modified residue" description="3'-nitrotyrosine" evidence="2">
    <location>
        <position position="82"/>
    </location>
</feature>
<feature type="modified residue" description="Phosphoserine" evidence="1">
    <location>
        <position position="92"/>
    </location>
</feature>
<feature type="modified residue" description="3'-nitrotyrosine" evidence="2">
    <location>
        <position position="104"/>
    </location>
</feature>
<feature type="modified residue" description="N6-acetyllysine" evidence="21">
    <location>
        <position position="115"/>
    </location>
</feature>
<feature type="modified residue" description="Phosphoserine" evidence="17 20">
    <location>
        <position position="232"/>
    </location>
</feature>
<feature type="cross-link" description="Glycyl lysine isopeptide (Lys-Gly) (interchain with G-Cter in SUMO2); alternate" evidence="24">
    <location>
        <position position="49"/>
    </location>
</feature>
<feature type="sequence conflict" description="In Ref. 3; AAV38817." evidence="19" ref="3">
    <original>D</original>
    <variation>N</variation>
    <location>
        <position position="136"/>
    </location>
</feature>
<feature type="helix" evidence="25">
    <location>
        <begin position="3"/>
        <end position="16"/>
    </location>
</feature>
<feature type="helix" evidence="25">
    <location>
        <begin position="19"/>
        <end position="31"/>
    </location>
</feature>
<feature type="helix" evidence="25">
    <location>
        <begin position="38"/>
        <end position="68"/>
    </location>
</feature>
<feature type="helix" evidence="25">
    <location>
        <begin position="76"/>
        <end position="103"/>
    </location>
</feature>
<feature type="helix" evidence="25">
    <location>
        <begin position="105"/>
        <end position="108"/>
    </location>
</feature>
<feature type="helix" evidence="25">
    <location>
        <begin position="112"/>
        <end position="132"/>
    </location>
</feature>
<feature type="helix" evidence="25">
    <location>
        <begin position="136"/>
        <end position="159"/>
    </location>
</feature>
<feature type="helix" evidence="25">
    <location>
        <begin position="165"/>
        <end position="180"/>
    </location>
</feature>
<feature type="helix" evidence="25">
    <location>
        <begin position="185"/>
        <end position="200"/>
    </location>
</feature>
<feature type="helix" evidence="25">
    <location>
        <begin position="201"/>
        <end position="205"/>
    </location>
</feature>
<feature type="helix" evidence="25">
    <location>
        <begin position="208"/>
        <end position="228"/>
    </location>
</feature>
<proteinExistence type="evidence at protein level"/>
<comment type="function">
    <text evidence="6">Adapter protein implicated in the regulation of a large spectrum of both general and specialized signaling pathways. Binds to a large number of partners, usually by recognition of a phosphoserine or phosphothreonine motif. Binding generally results in the modulation of the activity of the binding partner. Negatively regulates the kinase activity of PDPK1.</text>
</comment>
<comment type="subunit">
    <text evidence="1 3 5 6 7 8 9 10 11 12 13 14 15 16">Homodimer. Interacts with CDK16 (By similarity). Interacts with RGS7 (phosphorylated form) (PubMed:10862767). Interacts with SSH1. Interacts with CDKN1B ('Thr-198' phosphorylated form); the interaction translocates CDKN1B to the cytoplasm. Interacts with GAB2. Interacts with the 'Ser-241' phosphorylated form of PDPK1. Interacts with the 'Thr-369' phosphorylated form of DAPK2 (PubMed:26047703). Interacts with PI4KB, TBC1D22A and TBC1D22B (PubMed:23572552). Interacts with SLITRK1 (PubMed:19640509). Interacts with RIPOR2 isoform 2 (PubMed:25588844). Interacts with INAVA; the interaction increases upon PRR (pattern recognition receptor) stimulation and is required for cellular signaling pathway activation and cytokine secretion (PubMed:28436939). Interacts with MARK2, MARK3 and MARK4 (PubMed:16959763). Interacts with MEFV (PubMed:27030597).</text>
</comment>
<comment type="interaction">
    <interactant intactId="EBI-359854">
        <id>P27348</id>
    </interactant>
    <interactant intactId="EBI-1567267">
        <id>Q9P0K1-3</id>
        <label>ADAM22</label>
    </interactant>
    <organismsDiffer>false</organismsDiffer>
    <experiments>2</experiments>
</comment>
<comment type="interaction">
    <interactant intactId="EBI-359854">
        <id>P27348</id>
    </interactant>
    <interactant intactId="EBI-743313">
        <id>P49407</id>
        <label>ARRB1</label>
    </interactant>
    <organismsDiffer>false</organismsDiffer>
    <experiments>3</experiments>
</comment>
<comment type="interaction">
    <interactant intactId="EBI-359854">
        <id>P27348</id>
    </interactant>
    <interactant intactId="EBI-714559">
        <id>P32121</id>
        <label>ARRB2</label>
    </interactant>
    <organismsDiffer>false</organismsDiffer>
    <experiments>3</experiments>
</comment>
<comment type="interaction">
    <interactant intactId="EBI-359854">
        <id>P27348</id>
    </interactant>
    <interactant intactId="EBI-930964">
        <id>P54253</id>
        <label>ATXN1</label>
    </interactant>
    <organismsDiffer>false</organismsDiffer>
    <experiments>5</experiments>
</comment>
<comment type="interaction">
    <interactant intactId="EBI-359854">
        <id>P27348</id>
    </interactant>
    <interactant intactId="EBI-700771">
        <id>Q92934</id>
        <label>BAD</label>
    </interactant>
    <organismsDiffer>false</organismsDiffer>
    <experiments>7</experiments>
</comment>
<comment type="interaction">
    <interactant intactId="EBI-359854">
        <id>P27348</id>
    </interactant>
    <interactant intactId="EBI-518228">
        <id>P22681</id>
        <label>CBL</label>
    </interactant>
    <organismsDiffer>false</organismsDiffer>
    <experiments>7</experiments>
</comment>
<comment type="interaction">
    <interactant intactId="EBI-359854">
        <id>P27348</id>
    </interactant>
    <interactant intactId="EBI-11977221">
        <id>Q86Z20</id>
        <label>CCDC125</label>
    </interactant>
    <organismsDiffer>false</organismsDiffer>
    <experiments>3</experiments>
</comment>
<comment type="interaction">
    <interactant intactId="EBI-359854">
        <id>P27348</id>
    </interactant>
    <interactant intactId="EBI-747671">
        <id>P30304</id>
        <label>CDC25A</label>
    </interactant>
    <organismsDiffer>false</organismsDiffer>
    <experiments>3</experiments>
</comment>
<comment type="interaction">
    <interactant intactId="EBI-359854">
        <id>P27348</id>
    </interactant>
    <interactant intactId="EBI-1043945">
        <id>O94921</id>
        <label>CDK14</label>
    </interactant>
    <organismsDiffer>false</organismsDiffer>
    <experiments>4</experiments>
</comment>
<comment type="interaction">
    <interactant intactId="EBI-359854">
        <id>P27348</id>
    </interactant>
    <interactant intactId="EBI-297353">
        <id>P00533</id>
        <label>EGFR</label>
    </interactant>
    <organismsDiffer>false</organismsDiffer>
    <experiments>7</experiments>
</comment>
<comment type="interaction">
    <interactant intactId="EBI-359854">
        <id>P27348</id>
    </interactant>
    <interactant intactId="EBI-348571">
        <id>P02671</id>
        <label>FGA</label>
    </interactant>
    <organismsDiffer>false</organismsDiffer>
    <experiments>2</experiments>
</comment>
<comment type="interaction">
    <interactant intactId="EBI-359854">
        <id>P27348</id>
    </interactant>
    <interactant intactId="EBI-848239">
        <id>P23945</id>
        <label>FSHR</label>
    </interactant>
    <organismsDiffer>false</organismsDiffer>
    <experiments>4</experiments>
</comment>
<comment type="interaction">
    <interactant intactId="EBI-359854">
        <id>P27348</id>
    </interactant>
    <interactant intactId="EBI-308629">
        <id>P56524</id>
        <label>HDAC4</label>
    </interactant>
    <organismsDiffer>false</organismsDiffer>
    <experiments>6</experiments>
</comment>
<comment type="interaction">
    <interactant intactId="EBI-359854">
        <id>P27348</id>
    </interactant>
    <interactant intactId="EBI-722905">
        <id>P28290</id>
        <label>ITPRID2</label>
    </interactant>
    <organismsDiffer>false</organismsDiffer>
    <experiments>5</experiments>
</comment>
<comment type="interaction">
    <interactant intactId="EBI-359854">
        <id>P27348</id>
    </interactant>
    <interactant intactId="EBI-2556221">
        <id>Q14678</id>
        <label>KANK1</label>
    </interactant>
    <organismsDiffer>false</organismsDiffer>
    <experiments>2</experiments>
</comment>
<comment type="interaction">
    <interactant intactId="EBI-359854">
        <id>P27348</id>
    </interactant>
    <interactant intactId="EBI-6173812">
        <id>Q14678-2</id>
        <label>KANK1</label>
    </interactant>
    <organismsDiffer>false</organismsDiffer>
    <experiments>3</experiments>
</comment>
<comment type="interaction">
    <interactant intactId="EBI-359854">
        <id>P27348</id>
    </interactant>
    <interactant intactId="EBI-1644048">
        <id>O43896</id>
        <label>KIF1C</label>
    </interactant>
    <organismsDiffer>false</organismsDiffer>
    <experiments>5</experiments>
</comment>
<comment type="interaction">
    <interactant intactId="EBI-359854">
        <id>P27348</id>
    </interactant>
    <interactant intactId="EBI-5323863">
        <id>Q5S007</id>
        <label>LRRK2</label>
    </interactant>
    <organismsDiffer>false</organismsDiffer>
    <experiments>10</experiments>
</comment>
<comment type="interaction">
    <interactant intactId="EBI-359854">
        <id>P27348</id>
    </interactant>
    <interactant intactId="EBI-307281">
        <id>Q99759</id>
        <label>MAP3K3</label>
    </interactant>
    <organismsDiffer>false</organismsDiffer>
    <experiments>5</experiments>
</comment>
<comment type="interaction">
    <interactant intactId="EBI-359854">
        <id>P27348</id>
    </interactant>
    <interactant intactId="EBI-1022605">
        <id>Q6WCQ1</id>
        <label>MPRIP</label>
    </interactant>
    <organismsDiffer>false</organismsDiffer>
    <experiments>6</experiments>
</comment>
<comment type="interaction">
    <interactant intactId="EBI-359854">
        <id>P27348</id>
    </interactant>
    <interactant intactId="EBI-1053214">
        <id>Q9UBF8</id>
        <label>PI4KB</label>
    </interactant>
    <organismsDiffer>false</organismsDiffer>
    <experiments>5</experiments>
</comment>
<comment type="interaction">
    <interactant intactId="EBI-359854">
        <id>P27348</id>
    </interactant>
    <interactant intactId="EBI-365996">
        <id>P04049</id>
        <label>RAF1</label>
    </interactant>
    <organismsDiffer>false</organismsDiffer>
    <experiments>23</experiments>
</comment>
<comment type="interaction">
    <interactant intactId="EBI-359854">
        <id>P27348</id>
    </interactant>
    <interactant intactId="EBI-2822128">
        <id>Q96JI7</id>
        <label>SPG11</label>
    </interactant>
    <organismsDiffer>false</organismsDiffer>
    <experiments>2</experiments>
</comment>
<comment type="interaction">
    <interactant intactId="EBI-359854">
        <id>P27348</id>
    </interactant>
    <interactant intactId="EBI-1222387">
        <id>Q8WYL5</id>
        <label>SSH1</label>
    </interactant>
    <organismsDiffer>false</organismsDiffer>
    <experiments>2</experiments>
</comment>
<comment type="interaction">
    <interactant intactId="EBI-359854">
        <id>P27348</id>
    </interactant>
    <interactant intactId="EBI-5235829">
        <id>Q8IWZ5</id>
        <label>TRIM42</label>
    </interactant>
    <organismsDiffer>false</organismsDiffer>
    <experiments>4</experiments>
</comment>
<comment type="interaction">
    <interactant intactId="EBI-359854">
        <id>P27348</id>
    </interactant>
    <interactant intactId="EBI-359815">
        <id>P31946</id>
        <label>YWHAB</label>
    </interactant>
    <organismsDiffer>false</organismsDiffer>
    <experiments>8</experiments>
</comment>
<comment type="interaction">
    <interactant intactId="EBI-359854">
        <id>P27348</id>
    </interactant>
    <interactant intactId="EBI-356498">
        <id>P62258</id>
        <label>YWHAE</label>
    </interactant>
    <organismsDiffer>false</organismsDiffer>
    <experiments>14</experiments>
</comment>
<comment type="interaction">
    <interactant intactId="EBI-359854">
        <id>P27348</id>
    </interactant>
    <interactant intactId="EBI-359832">
        <id>P61981</id>
        <label>YWHAG</label>
    </interactant>
    <organismsDiffer>false</organismsDiffer>
    <experiments>11</experiments>
</comment>
<comment type="interaction">
    <interactant intactId="EBI-359854">
        <id>P27348</id>
    </interactant>
    <interactant intactId="EBI-359854">
        <id>P27348</id>
        <label>YWHAQ</label>
    </interactant>
    <organismsDiffer>false</organismsDiffer>
    <experiments>2</experiments>
</comment>
<comment type="interaction">
    <interactant intactId="EBI-359854">
        <id>P27348</id>
    </interactant>
    <interactant intactId="EBI-7540603">
        <id>P67828</id>
        <label>CSNK1A1</label>
    </interactant>
    <organismsDiffer>true</organismsDiffer>
    <experiments>2</experiments>
</comment>
<comment type="interaction">
    <interactant intactId="EBI-359854">
        <id>P27348</id>
    </interactant>
    <interactant intactId="EBI-6930266">
        <id>P61588</id>
        <label>Rnd3</label>
    </interactant>
    <organismsDiffer>true</organismsDiffer>
    <experiments>2</experiments>
</comment>
<comment type="interaction">
    <interactant intactId="EBI-359854">
        <id>P27348</id>
    </interactant>
    <interactant intactId="EBI-2504426">
        <id>B7UM99</id>
        <label>tir</label>
    </interactant>
    <organismsDiffer>true</organismsDiffer>
    <experiments>6</experiments>
</comment>
<comment type="subcellular location">
    <subcellularLocation>
        <location>Cytoplasm</location>
    </subcellularLocation>
    <text>In neurons, axonally transported to the nerve terminals.</text>
</comment>
<comment type="tissue specificity">
    <text evidence="4">Abundantly expressed in brain, heart and pancreas, and at lower levels in kidney and placenta. Up-regulated in the lumbar spinal cord from patients with sporadic amyotrophic lateral sclerosis (ALS) compared with controls, with highest levels of expression in individuals with predominant lower motor neuron involvement.</text>
</comment>
<comment type="PTM">
    <text evidence="17">Ser-232 is probably phosphorylated by CK1.</text>
</comment>
<comment type="similarity">
    <text evidence="19">Belongs to the 14-3-3 family.</text>
</comment>
<keyword id="KW-0002">3D-structure</keyword>
<keyword id="KW-0007">Acetylation</keyword>
<keyword id="KW-0963">Cytoplasm</keyword>
<keyword id="KW-0903">Direct protein sequencing</keyword>
<keyword id="KW-1017">Isopeptide bond</keyword>
<keyword id="KW-0944">Nitration</keyword>
<keyword id="KW-0597">Phosphoprotein</keyword>
<keyword id="KW-1267">Proteomics identification</keyword>
<keyword id="KW-1185">Reference proteome</keyword>
<keyword id="KW-0832">Ubl conjugation</keyword>
<organism>
    <name type="scientific">Homo sapiens</name>
    <name type="common">Human</name>
    <dbReference type="NCBI Taxonomy" id="9606"/>
    <lineage>
        <taxon>Eukaryota</taxon>
        <taxon>Metazoa</taxon>
        <taxon>Chordata</taxon>
        <taxon>Craniata</taxon>
        <taxon>Vertebrata</taxon>
        <taxon>Euteleostomi</taxon>
        <taxon>Mammalia</taxon>
        <taxon>Eutheria</taxon>
        <taxon>Euarchontoglires</taxon>
        <taxon>Primates</taxon>
        <taxon>Haplorrhini</taxon>
        <taxon>Catarrhini</taxon>
        <taxon>Hominidae</taxon>
        <taxon>Homo</taxon>
    </lineage>
</organism>
<dbReference type="EMBL" id="X56468">
    <property type="protein sequence ID" value="CAA39840.1"/>
    <property type="molecule type" value="mRNA"/>
</dbReference>
<dbReference type="EMBL" id="X57347">
    <property type="protein sequence ID" value="CAA40622.1"/>
    <property type="molecule type" value="mRNA"/>
</dbReference>
<dbReference type="EMBL" id="BT020014">
    <property type="protein sequence ID" value="AAV38817.1"/>
    <property type="molecule type" value="mRNA"/>
</dbReference>
<dbReference type="EMBL" id="CH471053">
    <property type="protein sequence ID" value="EAX00977.1"/>
    <property type="molecule type" value="Genomic_DNA"/>
</dbReference>
<dbReference type="EMBL" id="CH471053">
    <property type="protein sequence ID" value="EAX00979.1"/>
    <property type="molecule type" value="Genomic_DNA"/>
</dbReference>
<dbReference type="EMBL" id="BC050601">
    <property type="protein sequence ID" value="AAH50601.1"/>
    <property type="molecule type" value="mRNA"/>
</dbReference>
<dbReference type="EMBL" id="BC056867">
    <property type="protein sequence ID" value="AAH56867.1"/>
    <property type="molecule type" value="mRNA"/>
</dbReference>
<dbReference type="EMBL" id="BC093019">
    <property type="protein sequence ID" value="AAH93019.1"/>
    <property type="molecule type" value="mRNA"/>
</dbReference>
<dbReference type="EMBL" id="AF070556">
    <property type="protein sequence ID" value="AAC28640.1"/>
    <property type="molecule type" value="mRNA"/>
</dbReference>
<dbReference type="CCDS" id="CCDS1666.1"/>
<dbReference type="PIR" id="S15076">
    <property type="entry name" value="S15076"/>
</dbReference>
<dbReference type="RefSeq" id="NP_006817.1">
    <property type="nucleotide sequence ID" value="NM_006826.4"/>
</dbReference>
<dbReference type="PDB" id="2BTP">
    <property type="method" value="X-ray"/>
    <property type="resolution" value="2.80 A"/>
    <property type="chains" value="A/B=1-234"/>
</dbReference>
<dbReference type="PDB" id="5IQP">
    <property type="method" value="X-ray"/>
    <property type="resolution" value="2.60 A"/>
    <property type="chains" value="A/B=1-245"/>
</dbReference>
<dbReference type="PDB" id="6BCR">
    <property type="method" value="X-ray"/>
    <property type="resolution" value="1.99 A"/>
    <property type="chains" value="A/B/E/F=1-245"/>
</dbReference>
<dbReference type="PDB" id="6BD2">
    <property type="method" value="X-ray"/>
    <property type="resolution" value="2.90 A"/>
    <property type="chains" value="A/B=1-245"/>
</dbReference>
<dbReference type="PDB" id="6BQT">
    <property type="method" value="X-ray"/>
    <property type="resolution" value="2.80 A"/>
    <property type="chains" value="A/B/D/E/G/H/J/K=1-245"/>
</dbReference>
<dbReference type="PDB" id="6KZG">
    <property type="method" value="X-ray"/>
    <property type="resolution" value="2.00 A"/>
    <property type="chains" value="A/B=2-234"/>
</dbReference>
<dbReference type="PDB" id="6KZH">
    <property type="method" value="X-ray"/>
    <property type="resolution" value="2.65 A"/>
    <property type="chains" value="A/B=2-234"/>
</dbReference>
<dbReference type="PDBsum" id="2BTP"/>
<dbReference type="PDBsum" id="5IQP"/>
<dbReference type="PDBsum" id="6BCR"/>
<dbReference type="PDBsum" id="6BD2"/>
<dbReference type="PDBsum" id="6BQT"/>
<dbReference type="PDBsum" id="6KZG"/>
<dbReference type="PDBsum" id="6KZH"/>
<dbReference type="SMR" id="P27348"/>
<dbReference type="BioGRID" id="116168">
    <property type="interactions" value="1224"/>
</dbReference>
<dbReference type="CORUM" id="P27348"/>
<dbReference type="DIP" id="DIP-27584N"/>
<dbReference type="ELM" id="P27348"/>
<dbReference type="FunCoup" id="P27348">
    <property type="interactions" value="2917"/>
</dbReference>
<dbReference type="IntAct" id="P27348">
    <property type="interactions" value="694"/>
</dbReference>
<dbReference type="MINT" id="P27348"/>
<dbReference type="STRING" id="9606.ENSP00000371267"/>
<dbReference type="BindingDB" id="P27348"/>
<dbReference type="ChEMBL" id="CHEMBL3710408"/>
<dbReference type="DrugBank" id="DB12695">
    <property type="generic name" value="Phenethyl Isothiocyanate"/>
</dbReference>
<dbReference type="TCDB" id="8.A.98.1.9">
    <property type="family name" value="the 14-3-3 protein (14-3-3) family"/>
</dbReference>
<dbReference type="GlyGen" id="P27348">
    <property type="glycosylation" value="5 sites, 1 O-linked glycan (5 sites)"/>
</dbReference>
<dbReference type="iPTMnet" id="P27348"/>
<dbReference type="MetOSite" id="P27348"/>
<dbReference type="PhosphoSitePlus" id="P27348"/>
<dbReference type="SwissPalm" id="P27348"/>
<dbReference type="BioMuta" id="YWHAQ"/>
<dbReference type="DMDM" id="112690"/>
<dbReference type="OGP" id="P27348"/>
<dbReference type="REPRODUCTION-2DPAGE" id="IPI00018146"/>
<dbReference type="CPTAC" id="CPTAC-143"/>
<dbReference type="CPTAC" id="CPTAC-144"/>
<dbReference type="jPOST" id="P27348"/>
<dbReference type="MassIVE" id="P27348"/>
<dbReference type="PaxDb" id="9606-ENSP00000371267"/>
<dbReference type="PeptideAtlas" id="P27348"/>
<dbReference type="ProteomicsDB" id="54380"/>
<dbReference type="Pumba" id="P27348"/>
<dbReference type="TopDownProteomics" id="P27348"/>
<dbReference type="Antibodypedia" id="1900">
    <property type="antibodies" value="581 antibodies from 45 providers"/>
</dbReference>
<dbReference type="DNASU" id="10971"/>
<dbReference type="Ensembl" id="ENST00000238081.8">
    <property type="protein sequence ID" value="ENSP00000238081.3"/>
    <property type="gene ID" value="ENSG00000134308.14"/>
</dbReference>
<dbReference type="Ensembl" id="ENST00000381844.8">
    <property type="protein sequence ID" value="ENSP00000371267.4"/>
    <property type="gene ID" value="ENSG00000134308.14"/>
</dbReference>
<dbReference type="GeneID" id="10971"/>
<dbReference type="KEGG" id="hsa:10971"/>
<dbReference type="MANE-Select" id="ENST00000238081.8">
    <property type="protein sequence ID" value="ENSP00000238081.3"/>
    <property type="RefSeq nucleotide sequence ID" value="NM_006826.4"/>
    <property type="RefSeq protein sequence ID" value="NP_006817.1"/>
</dbReference>
<dbReference type="UCSC" id="uc002qzx.5">
    <property type="organism name" value="human"/>
</dbReference>
<dbReference type="AGR" id="HGNC:12854"/>
<dbReference type="CTD" id="10971"/>
<dbReference type="DisGeNET" id="10971"/>
<dbReference type="GeneCards" id="YWHAQ"/>
<dbReference type="HGNC" id="HGNC:12854">
    <property type="gene designation" value="YWHAQ"/>
</dbReference>
<dbReference type="HPA" id="ENSG00000134308">
    <property type="expression patterns" value="Low tissue specificity"/>
</dbReference>
<dbReference type="MIM" id="609009">
    <property type="type" value="gene"/>
</dbReference>
<dbReference type="neXtProt" id="NX_P27348"/>
<dbReference type="OpenTargets" id="ENSG00000134308"/>
<dbReference type="PharmGKB" id="PA37443"/>
<dbReference type="VEuPathDB" id="HostDB:ENSG00000134308"/>
<dbReference type="eggNOG" id="KOG0841">
    <property type="taxonomic scope" value="Eukaryota"/>
</dbReference>
<dbReference type="GeneTree" id="ENSGT01090000260040"/>
<dbReference type="HOGENOM" id="CLU_058290_1_0_1"/>
<dbReference type="InParanoid" id="P27348"/>
<dbReference type="OMA" id="CFLMYYL"/>
<dbReference type="OrthoDB" id="10260625at2759"/>
<dbReference type="PAN-GO" id="P27348">
    <property type="GO annotations" value="3 GO annotations based on evolutionary models"/>
</dbReference>
<dbReference type="PhylomeDB" id="P27348"/>
<dbReference type="TreeFam" id="TF102002"/>
<dbReference type="PathwayCommons" id="P27348"/>
<dbReference type="Reactome" id="R-HSA-111447">
    <property type="pathway name" value="Activation of BAD and translocation to mitochondria"/>
</dbReference>
<dbReference type="Reactome" id="R-HSA-1445148">
    <property type="pathway name" value="Translocation of SLC2A4 (GLUT4) to the plasma membrane"/>
</dbReference>
<dbReference type="Reactome" id="R-HSA-5625740">
    <property type="pathway name" value="RHO GTPases activate PKNs"/>
</dbReference>
<dbReference type="Reactome" id="R-HSA-5628897">
    <property type="pathway name" value="TP53 Regulates Metabolic Genes"/>
</dbReference>
<dbReference type="Reactome" id="R-HSA-75035">
    <property type="pathway name" value="Chk1/Chk2(Cds1) mediated inactivation of Cyclin B:Cdk1 complex"/>
</dbReference>
<dbReference type="Reactome" id="R-HSA-9614399">
    <property type="pathway name" value="Regulation of localization of FOXO transcription factors"/>
</dbReference>
<dbReference type="Reactome" id="R-HSA-9735871">
    <property type="pathway name" value="SARS-CoV-1 targets host intracellular signalling and regulatory pathways"/>
</dbReference>
<dbReference type="Reactome" id="R-HSA-9755779">
    <property type="pathway name" value="SARS-CoV-2 targets host intracellular signalling and regulatory pathways"/>
</dbReference>
<dbReference type="SignaLink" id="P27348"/>
<dbReference type="SIGNOR" id="P27348"/>
<dbReference type="BioGRID-ORCS" id="10971">
    <property type="hits" value="14 hits in 1156 CRISPR screens"/>
</dbReference>
<dbReference type="CD-CODE" id="DEE660B4">
    <property type="entry name" value="Stress granule"/>
</dbReference>
<dbReference type="CD-CODE" id="FB4E32DD">
    <property type="entry name" value="Presynaptic clusters and postsynaptic densities"/>
</dbReference>
<dbReference type="ChiTaRS" id="YWHAQ">
    <property type="organism name" value="human"/>
</dbReference>
<dbReference type="EvolutionaryTrace" id="P27348"/>
<dbReference type="GeneWiki" id="YWHAQ"/>
<dbReference type="GenomeRNAi" id="10971"/>
<dbReference type="Pharos" id="P27348">
    <property type="development level" value="Tbio"/>
</dbReference>
<dbReference type="PRO" id="PR:P27348"/>
<dbReference type="Proteomes" id="UP000005640">
    <property type="component" value="Chromosome 2"/>
</dbReference>
<dbReference type="RNAct" id="P27348">
    <property type="molecule type" value="protein"/>
</dbReference>
<dbReference type="Bgee" id="ENSG00000134308">
    <property type="expression patterns" value="Expressed in sperm and 214 other cell types or tissues"/>
</dbReference>
<dbReference type="ExpressionAtlas" id="P27348">
    <property type="expression patterns" value="baseline and differential"/>
</dbReference>
<dbReference type="GO" id="GO:0005737">
    <property type="term" value="C:cytoplasm"/>
    <property type="evidence" value="ECO:0000314"/>
    <property type="project" value="BHF-UCL"/>
</dbReference>
<dbReference type="GO" id="GO:0005829">
    <property type="term" value="C:cytosol"/>
    <property type="evidence" value="ECO:0000304"/>
    <property type="project" value="Reactome"/>
</dbReference>
<dbReference type="GO" id="GO:0070062">
    <property type="term" value="C:extracellular exosome"/>
    <property type="evidence" value="ECO:0007005"/>
    <property type="project" value="UniProtKB"/>
</dbReference>
<dbReference type="GO" id="GO:0005925">
    <property type="term" value="C:focal adhesion"/>
    <property type="evidence" value="ECO:0007005"/>
    <property type="project" value="UniProtKB"/>
</dbReference>
<dbReference type="GO" id="GO:0016020">
    <property type="term" value="C:membrane"/>
    <property type="evidence" value="ECO:0007005"/>
    <property type="project" value="UniProtKB"/>
</dbReference>
<dbReference type="GO" id="GO:0005634">
    <property type="term" value="C:nucleus"/>
    <property type="evidence" value="ECO:0000314"/>
    <property type="project" value="FlyBase"/>
</dbReference>
<dbReference type="GO" id="GO:0032991">
    <property type="term" value="C:protein-containing complex"/>
    <property type="evidence" value="ECO:0000314"/>
    <property type="project" value="MGI"/>
</dbReference>
<dbReference type="GO" id="GO:0045202">
    <property type="term" value="C:synapse"/>
    <property type="evidence" value="ECO:0007669"/>
    <property type="project" value="Ensembl"/>
</dbReference>
<dbReference type="GO" id="GO:0071889">
    <property type="term" value="F:14-3-3 protein binding"/>
    <property type="evidence" value="ECO:0007669"/>
    <property type="project" value="Ensembl"/>
</dbReference>
<dbReference type="GO" id="GO:0042802">
    <property type="term" value="F:identical protein binding"/>
    <property type="evidence" value="ECO:0000353"/>
    <property type="project" value="IntAct"/>
</dbReference>
<dbReference type="GO" id="GO:0019904">
    <property type="term" value="F:protein domain specific binding"/>
    <property type="evidence" value="ECO:0007669"/>
    <property type="project" value="Ensembl"/>
</dbReference>
<dbReference type="GO" id="GO:0044325">
    <property type="term" value="F:transmembrane transporter binding"/>
    <property type="evidence" value="ECO:0007669"/>
    <property type="project" value="Ensembl"/>
</dbReference>
<dbReference type="GO" id="GO:0045892">
    <property type="term" value="P:negative regulation of DNA-templated transcription"/>
    <property type="evidence" value="ECO:0000314"/>
    <property type="project" value="BHF-UCL"/>
</dbReference>
<dbReference type="GO" id="GO:0034766">
    <property type="term" value="P:negative regulation of monoatomic ion transmembrane transport"/>
    <property type="evidence" value="ECO:0007669"/>
    <property type="project" value="Ensembl"/>
</dbReference>
<dbReference type="GO" id="GO:0008104">
    <property type="term" value="P:protein localization"/>
    <property type="evidence" value="ECO:0000318"/>
    <property type="project" value="GO_Central"/>
</dbReference>
<dbReference type="GO" id="GO:0006605">
    <property type="term" value="P:protein targeting"/>
    <property type="evidence" value="ECO:0007669"/>
    <property type="project" value="Ensembl"/>
</dbReference>
<dbReference type="GO" id="GO:0007165">
    <property type="term" value="P:signal transduction"/>
    <property type="evidence" value="ECO:0000318"/>
    <property type="project" value="GO_Central"/>
</dbReference>
<dbReference type="GO" id="GO:0007264">
    <property type="term" value="P:small GTPase-mediated signal transduction"/>
    <property type="evidence" value="ECO:0007669"/>
    <property type="project" value="Ensembl"/>
</dbReference>
<dbReference type="GO" id="GO:0021762">
    <property type="term" value="P:substantia nigra development"/>
    <property type="evidence" value="ECO:0007007"/>
    <property type="project" value="UniProtKB"/>
</dbReference>
<dbReference type="CDD" id="cd10023">
    <property type="entry name" value="14-3-3_theta"/>
    <property type="match status" value="1"/>
</dbReference>
<dbReference type="FunFam" id="1.20.190.20:FF:000001">
    <property type="entry name" value="14-3-3 gamma 1"/>
    <property type="match status" value="1"/>
</dbReference>
<dbReference type="Gene3D" id="1.20.190.20">
    <property type="entry name" value="14-3-3 domain"/>
    <property type="match status" value="1"/>
</dbReference>
<dbReference type="InterPro" id="IPR000308">
    <property type="entry name" value="14-3-3"/>
</dbReference>
<dbReference type="InterPro" id="IPR023409">
    <property type="entry name" value="14-3-3_CS"/>
</dbReference>
<dbReference type="InterPro" id="IPR036815">
    <property type="entry name" value="14-3-3_dom_sf"/>
</dbReference>
<dbReference type="InterPro" id="IPR023410">
    <property type="entry name" value="14-3-3_domain"/>
</dbReference>
<dbReference type="InterPro" id="IPR042584">
    <property type="entry name" value="14-3-3_theta"/>
</dbReference>
<dbReference type="PANTHER" id="PTHR18860">
    <property type="entry name" value="14-3-3 PROTEIN"/>
    <property type="match status" value="1"/>
</dbReference>
<dbReference type="Pfam" id="PF00244">
    <property type="entry name" value="14-3-3"/>
    <property type="match status" value="1"/>
</dbReference>
<dbReference type="PIRSF" id="PIRSF000868">
    <property type="entry name" value="14-3-3"/>
    <property type="match status" value="1"/>
</dbReference>
<dbReference type="PRINTS" id="PR00305">
    <property type="entry name" value="1433ZETA"/>
</dbReference>
<dbReference type="SMART" id="SM00101">
    <property type="entry name" value="14_3_3"/>
    <property type="match status" value="1"/>
</dbReference>
<dbReference type="SUPFAM" id="SSF48445">
    <property type="entry name" value="14-3-3 protein"/>
    <property type="match status" value="1"/>
</dbReference>
<dbReference type="PROSITE" id="PS00796">
    <property type="entry name" value="1433_1"/>
    <property type="match status" value="1"/>
</dbReference>
<dbReference type="PROSITE" id="PS00797">
    <property type="entry name" value="1433_2"/>
    <property type="match status" value="1"/>
</dbReference>
<protein>
    <recommendedName>
        <fullName>14-3-3 protein theta</fullName>
    </recommendedName>
    <alternativeName>
        <fullName>14-3-3 protein T-cell</fullName>
    </alternativeName>
    <alternativeName>
        <fullName>14-3-3 protein tau</fullName>
    </alternativeName>
    <alternativeName>
        <fullName>Protein HS1</fullName>
    </alternativeName>
</protein>
<gene>
    <name type="primary">YWHAQ</name>
</gene>
<evidence type="ECO:0000250" key="1">
    <source>
        <dbReference type="UniProtKB" id="P68254"/>
    </source>
</evidence>
<evidence type="ECO:0000250" key="2">
    <source>
        <dbReference type="UniProtKB" id="Q9CQV8"/>
    </source>
</evidence>
<evidence type="ECO:0000269" key="3">
    <source>
    </source>
</evidence>
<evidence type="ECO:0000269" key="4">
    <source>
    </source>
</evidence>
<evidence type="ECO:0000269" key="5">
    <source>
    </source>
</evidence>
<evidence type="ECO:0000269" key="6">
    <source>
    </source>
</evidence>
<evidence type="ECO:0000269" key="7">
    <source>
    </source>
</evidence>
<evidence type="ECO:0000269" key="8">
    <source>
    </source>
</evidence>
<evidence type="ECO:0000269" key="9">
    <source>
    </source>
</evidence>
<evidence type="ECO:0000269" key="10">
    <source>
    </source>
</evidence>
<evidence type="ECO:0000269" key="11">
    <source>
    </source>
</evidence>
<evidence type="ECO:0000269" key="12">
    <source>
    </source>
</evidence>
<evidence type="ECO:0000269" key="13">
    <source>
    </source>
</evidence>
<evidence type="ECO:0000269" key="14">
    <source>
    </source>
</evidence>
<evidence type="ECO:0000269" key="15">
    <source>
    </source>
</evidence>
<evidence type="ECO:0000269" key="16">
    <source>
    </source>
</evidence>
<evidence type="ECO:0000269" key="17">
    <source>
    </source>
</evidence>
<evidence type="ECO:0000269" key="18">
    <source ref="8"/>
</evidence>
<evidence type="ECO:0000305" key="19"/>
<evidence type="ECO:0007744" key="20">
    <source>
    </source>
</evidence>
<evidence type="ECO:0007744" key="21">
    <source>
    </source>
</evidence>
<evidence type="ECO:0007744" key="22">
    <source>
    </source>
</evidence>
<evidence type="ECO:0007744" key="23">
    <source>
    </source>
</evidence>
<evidence type="ECO:0007744" key="24">
    <source>
    </source>
</evidence>
<evidence type="ECO:0007829" key="25">
    <source>
        <dbReference type="PDB" id="6BCR"/>
    </source>
</evidence>